<protein>
    <recommendedName>
        <fullName evidence="1">Small ribosomal subunit protein uS9</fullName>
    </recommendedName>
    <alternativeName>
        <fullName evidence="2">30S ribosomal protein S9</fullName>
    </alternativeName>
</protein>
<reference key="1">
    <citation type="journal article" date="2005" name="J. Bacteriol.">
        <title>Genomic sequence of an otitis media isolate of nontypeable Haemophilus influenzae: comparative study with H. influenzae serotype d, strain KW20.</title>
        <authorList>
            <person name="Harrison A."/>
            <person name="Dyer D.W."/>
            <person name="Gillaspy A."/>
            <person name="Ray W.C."/>
            <person name="Mungur R."/>
            <person name="Carson M.B."/>
            <person name="Zhong H."/>
            <person name="Gipson J."/>
            <person name="Gipson M."/>
            <person name="Johnson L.S."/>
            <person name="Lewis L."/>
            <person name="Bakaletz L.O."/>
            <person name="Munson R.S. Jr."/>
        </authorList>
    </citation>
    <scope>NUCLEOTIDE SEQUENCE [LARGE SCALE GENOMIC DNA]</scope>
    <source>
        <strain>86-028NP</strain>
    </source>
</reference>
<name>RS9_HAEI8</name>
<comment type="similarity">
    <text evidence="1">Belongs to the universal ribosomal protein uS9 family.</text>
</comment>
<organism>
    <name type="scientific">Haemophilus influenzae (strain 86-028NP)</name>
    <dbReference type="NCBI Taxonomy" id="281310"/>
    <lineage>
        <taxon>Bacteria</taxon>
        <taxon>Pseudomonadati</taxon>
        <taxon>Pseudomonadota</taxon>
        <taxon>Gammaproteobacteria</taxon>
        <taxon>Pasteurellales</taxon>
        <taxon>Pasteurellaceae</taxon>
        <taxon>Haemophilus</taxon>
    </lineage>
</organism>
<sequence>MAENQNYGTGRRKSSSARVFIKPGSGKITINQRELDVYFGRETARMVVRQPLELVELTDKLDLYITVKGGGISGQAGAIRHGITRALMEYDETLRPALRAAGFVTRDARRVERKKVGLHKARRRPQYSKR</sequence>
<accession>Q4QKG9</accession>
<gene>
    <name evidence="1" type="primary">rpsI</name>
    <name type="ordered locus">NTHI1688</name>
</gene>
<evidence type="ECO:0000255" key="1">
    <source>
        <dbReference type="HAMAP-Rule" id="MF_00532"/>
    </source>
</evidence>
<evidence type="ECO:0000305" key="2"/>
<dbReference type="EMBL" id="CP000057">
    <property type="protein sequence ID" value="AAX88478.1"/>
    <property type="molecule type" value="Genomic_DNA"/>
</dbReference>
<dbReference type="RefSeq" id="WP_005631594.1">
    <property type="nucleotide sequence ID" value="NC_007146.2"/>
</dbReference>
<dbReference type="SMR" id="Q4QKG9"/>
<dbReference type="GeneID" id="93220412"/>
<dbReference type="KEGG" id="hit:NTHI1688"/>
<dbReference type="HOGENOM" id="CLU_046483_2_1_6"/>
<dbReference type="Proteomes" id="UP000002525">
    <property type="component" value="Chromosome"/>
</dbReference>
<dbReference type="GO" id="GO:0022627">
    <property type="term" value="C:cytosolic small ribosomal subunit"/>
    <property type="evidence" value="ECO:0007669"/>
    <property type="project" value="TreeGrafter"/>
</dbReference>
<dbReference type="GO" id="GO:0003723">
    <property type="term" value="F:RNA binding"/>
    <property type="evidence" value="ECO:0007669"/>
    <property type="project" value="TreeGrafter"/>
</dbReference>
<dbReference type="GO" id="GO:0003735">
    <property type="term" value="F:structural constituent of ribosome"/>
    <property type="evidence" value="ECO:0007669"/>
    <property type="project" value="InterPro"/>
</dbReference>
<dbReference type="GO" id="GO:0006412">
    <property type="term" value="P:translation"/>
    <property type="evidence" value="ECO:0007669"/>
    <property type="project" value="UniProtKB-UniRule"/>
</dbReference>
<dbReference type="FunFam" id="3.30.230.10:FF:000001">
    <property type="entry name" value="30S ribosomal protein S9"/>
    <property type="match status" value="1"/>
</dbReference>
<dbReference type="Gene3D" id="3.30.230.10">
    <property type="match status" value="1"/>
</dbReference>
<dbReference type="HAMAP" id="MF_00532_B">
    <property type="entry name" value="Ribosomal_uS9_B"/>
    <property type="match status" value="1"/>
</dbReference>
<dbReference type="InterPro" id="IPR020568">
    <property type="entry name" value="Ribosomal_Su5_D2-typ_SF"/>
</dbReference>
<dbReference type="InterPro" id="IPR000754">
    <property type="entry name" value="Ribosomal_uS9"/>
</dbReference>
<dbReference type="InterPro" id="IPR023035">
    <property type="entry name" value="Ribosomal_uS9_bac/plastid"/>
</dbReference>
<dbReference type="InterPro" id="IPR020574">
    <property type="entry name" value="Ribosomal_uS9_CS"/>
</dbReference>
<dbReference type="InterPro" id="IPR014721">
    <property type="entry name" value="Ribsml_uS5_D2-typ_fold_subgr"/>
</dbReference>
<dbReference type="NCBIfam" id="NF001099">
    <property type="entry name" value="PRK00132.1"/>
    <property type="match status" value="1"/>
</dbReference>
<dbReference type="PANTHER" id="PTHR21569">
    <property type="entry name" value="RIBOSOMAL PROTEIN S9"/>
    <property type="match status" value="1"/>
</dbReference>
<dbReference type="PANTHER" id="PTHR21569:SF1">
    <property type="entry name" value="SMALL RIBOSOMAL SUBUNIT PROTEIN US9M"/>
    <property type="match status" value="1"/>
</dbReference>
<dbReference type="Pfam" id="PF00380">
    <property type="entry name" value="Ribosomal_S9"/>
    <property type="match status" value="1"/>
</dbReference>
<dbReference type="SUPFAM" id="SSF54211">
    <property type="entry name" value="Ribosomal protein S5 domain 2-like"/>
    <property type="match status" value="1"/>
</dbReference>
<dbReference type="PROSITE" id="PS00360">
    <property type="entry name" value="RIBOSOMAL_S9"/>
    <property type="match status" value="1"/>
</dbReference>
<keyword id="KW-0687">Ribonucleoprotein</keyword>
<keyword id="KW-0689">Ribosomal protein</keyword>
<feature type="chain" id="PRO_1000051226" description="Small ribosomal subunit protein uS9">
    <location>
        <begin position="1"/>
        <end position="130"/>
    </location>
</feature>
<proteinExistence type="inferred from homology"/>